<accession>Q9Z1J3</accession>
<accession>Q8C6I5</accession>
<organism>
    <name type="scientific">Mus musculus</name>
    <name type="common">Mouse</name>
    <dbReference type="NCBI Taxonomy" id="10090"/>
    <lineage>
        <taxon>Eukaryota</taxon>
        <taxon>Metazoa</taxon>
        <taxon>Chordata</taxon>
        <taxon>Craniata</taxon>
        <taxon>Vertebrata</taxon>
        <taxon>Euteleostomi</taxon>
        <taxon>Mammalia</taxon>
        <taxon>Eutheria</taxon>
        <taxon>Euarchontoglires</taxon>
        <taxon>Glires</taxon>
        <taxon>Rodentia</taxon>
        <taxon>Myomorpha</taxon>
        <taxon>Muroidea</taxon>
        <taxon>Muridae</taxon>
        <taxon>Murinae</taxon>
        <taxon>Mus</taxon>
        <taxon>Mus</taxon>
    </lineage>
</organism>
<sequence length="459" mass="50570">MVGSVAGNMLLRAAWRRASLAATSLALGRSSVPTRGLRLRVVDHGPHSPVHSEAEAVLRPLYMDVQATTPLDPRVLDAMLPYLVNYYGNPHSRTHAYGWESEAAMERARQQVASLIGADPREIIFTSGATESNNIAIKGVARFYRSRKKHLVTTQTEHKCVLDSCRSLEAEGFRVTYLPVQKSGIIDLKELEAAIQPDTSLVSVMTVNNEIGVKQPIAEIGQICSSRKVYFHTDAAQAVGKIPLDVNDMKIDLMSISGHKLYGPKGVGAIYIRRRPRVRVEALQSGGGQERGMRSGTVPTPLVVGLGAACELAQQEMEYDHKRISKLAERLVQNIMKNLPDVVMNGDPKQHYPGCINLSFAYVEGESLLMALKDVALSSGSACTSASLEPSYVLRAIGTDEDLAHSSIRFGIGRFTTEEEVDYTAEKCIHHVKRLREMSPLWEMVQDGIDLKSIKWTQH</sequence>
<feature type="transit peptide" description="Mitochondrion" evidence="4">
    <location>
        <begin position="1"/>
        <end position="17"/>
    </location>
</feature>
<feature type="chain" id="PRO_0000001294" description="Cysteine desulfurase">
    <location>
        <begin position="18"/>
        <end position="459"/>
    </location>
</feature>
<feature type="active site" description="Cysteine persulfide intermediate" evidence="10">
    <location>
        <position position="383"/>
    </location>
</feature>
<feature type="binding site" evidence="3">
    <location>
        <position position="129"/>
    </location>
    <ligand>
        <name>pyridoxal 5'-phosphate</name>
        <dbReference type="ChEBI" id="CHEBI:597326"/>
    </ligand>
</feature>
<feature type="binding site" evidence="3">
    <location>
        <position position="130"/>
    </location>
    <ligand>
        <name>pyridoxal 5'-phosphate</name>
        <dbReference type="ChEBI" id="CHEBI:597326"/>
    </ligand>
</feature>
<feature type="binding site" evidence="3">
    <location>
        <position position="237"/>
    </location>
    <ligand>
        <name>pyridoxal 5'-phosphate</name>
        <dbReference type="ChEBI" id="CHEBI:597326"/>
    </ligand>
</feature>
<feature type="binding site" evidence="3">
    <location>
        <position position="257"/>
    </location>
    <ligand>
        <name>pyridoxal 5'-phosphate</name>
        <dbReference type="ChEBI" id="CHEBI:597326"/>
    </ligand>
</feature>
<feature type="binding site" evidence="3">
    <location>
        <position position="259"/>
    </location>
    <ligand>
        <name>pyridoxal 5'-phosphate</name>
        <dbReference type="ChEBI" id="CHEBI:597326"/>
    </ligand>
</feature>
<feature type="binding site" evidence="3">
    <location>
        <position position="297"/>
    </location>
    <ligand>
        <name>pyridoxal 5'-phosphate</name>
        <dbReference type="ChEBI" id="CHEBI:597326"/>
    </ligand>
</feature>
<feature type="binding site" description="via persulfide group" evidence="1">
    <location>
        <position position="383"/>
    </location>
    <ligand>
        <name>[2Fe-2S] cluster</name>
        <dbReference type="ChEBI" id="CHEBI:190135"/>
        <note>ligand shared with ISCU</note>
    </ligand>
</feature>
<feature type="binding site" evidence="3">
    <location>
        <position position="383"/>
    </location>
    <ligand>
        <name>Zn(2+)</name>
        <dbReference type="ChEBI" id="CHEBI:29105"/>
        <note>ligand shared with ISCU (isoform 2)</note>
    </ligand>
</feature>
<feature type="modified residue" description="N6-(pyridoxal phosphate)lysine" evidence="3">
    <location>
        <position position="260"/>
    </location>
</feature>
<feature type="modified residue" description="Cysteine persulfide" evidence="10">
    <location>
        <position position="383"/>
    </location>
</feature>
<feature type="sequence conflict" description="In Ref. 1; CAA10916." evidence="9" ref="1">
    <original>G</original>
    <variation>R</variation>
    <location>
        <position position="221"/>
    </location>
</feature>
<feature type="sequence conflict" description="In Ref. 1; CAA10916." evidence="9" ref="1">
    <original>N</original>
    <variation>K</variation>
    <location>
        <position position="334"/>
    </location>
</feature>
<feature type="sequence conflict" description="In Ref. 1; CAA10916." evidence="9" ref="1">
    <original>L</original>
    <variation>F</variation>
    <location>
        <position position="394"/>
    </location>
</feature>
<reference key="1">
    <citation type="journal article" date="1998" name="FEBS Lett.">
        <title>cDNA cloning and characterization of mouse nifS-like protein, m-Nfs1: mitochondrial localization of eukaryotic NifS-like proteins.</title>
        <authorList>
            <person name="Nakai Y."/>
            <person name="Yoshihara Y."/>
            <person name="Hayashi H."/>
            <person name="Kagamiyama H."/>
        </authorList>
    </citation>
    <scope>NUCLEOTIDE SEQUENCE [MRNA]</scope>
    <scope>SUBCELLULAR LOCATION</scope>
    <scope>TISSUE SPECIFICITY</scope>
    <source>
        <strain>BALB/cJ</strain>
        <tissue>Olfactory epithelium</tissue>
    </source>
</reference>
<reference key="2">
    <citation type="journal article" date="2005" name="Science">
        <title>The transcriptional landscape of the mammalian genome.</title>
        <authorList>
            <person name="Carninci P."/>
            <person name="Kasukawa T."/>
            <person name="Katayama S."/>
            <person name="Gough J."/>
            <person name="Frith M.C."/>
            <person name="Maeda N."/>
            <person name="Oyama R."/>
            <person name="Ravasi T."/>
            <person name="Lenhard B."/>
            <person name="Wells C."/>
            <person name="Kodzius R."/>
            <person name="Shimokawa K."/>
            <person name="Bajic V.B."/>
            <person name="Brenner S.E."/>
            <person name="Batalov S."/>
            <person name="Forrest A.R."/>
            <person name="Zavolan M."/>
            <person name="Davis M.J."/>
            <person name="Wilming L.G."/>
            <person name="Aidinis V."/>
            <person name="Allen J.E."/>
            <person name="Ambesi-Impiombato A."/>
            <person name="Apweiler R."/>
            <person name="Aturaliya R.N."/>
            <person name="Bailey T.L."/>
            <person name="Bansal M."/>
            <person name="Baxter L."/>
            <person name="Beisel K.W."/>
            <person name="Bersano T."/>
            <person name="Bono H."/>
            <person name="Chalk A.M."/>
            <person name="Chiu K.P."/>
            <person name="Choudhary V."/>
            <person name="Christoffels A."/>
            <person name="Clutterbuck D.R."/>
            <person name="Crowe M.L."/>
            <person name="Dalla E."/>
            <person name="Dalrymple B.P."/>
            <person name="de Bono B."/>
            <person name="Della Gatta G."/>
            <person name="di Bernardo D."/>
            <person name="Down T."/>
            <person name="Engstrom P."/>
            <person name="Fagiolini M."/>
            <person name="Faulkner G."/>
            <person name="Fletcher C.F."/>
            <person name="Fukushima T."/>
            <person name="Furuno M."/>
            <person name="Futaki S."/>
            <person name="Gariboldi M."/>
            <person name="Georgii-Hemming P."/>
            <person name="Gingeras T.R."/>
            <person name="Gojobori T."/>
            <person name="Green R.E."/>
            <person name="Gustincich S."/>
            <person name="Harbers M."/>
            <person name="Hayashi Y."/>
            <person name="Hensch T.K."/>
            <person name="Hirokawa N."/>
            <person name="Hill D."/>
            <person name="Huminiecki L."/>
            <person name="Iacono M."/>
            <person name="Ikeo K."/>
            <person name="Iwama A."/>
            <person name="Ishikawa T."/>
            <person name="Jakt M."/>
            <person name="Kanapin A."/>
            <person name="Katoh M."/>
            <person name="Kawasawa Y."/>
            <person name="Kelso J."/>
            <person name="Kitamura H."/>
            <person name="Kitano H."/>
            <person name="Kollias G."/>
            <person name="Krishnan S.P."/>
            <person name="Kruger A."/>
            <person name="Kummerfeld S.K."/>
            <person name="Kurochkin I.V."/>
            <person name="Lareau L.F."/>
            <person name="Lazarevic D."/>
            <person name="Lipovich L."/>
            <person name="Liu J."/>
            <person name="Liuni S."/>
            <person name="McWilliam S."/>
            <person name="Madan Babu M."/>
            <person name="Madera M."/>
            <person name="Marchionni L."/>
            <person name="Matsuda H."/>
            <person name="Matsuzawa S."/>
            <person name="Miki H."/>
            <person name="Mignone F."/>
            <person name="Miyake S."/>
            <person name="Morris K."/>
            <person name="Mottagui-Tabar S."/>
            <person name="Mulder N."/>
            <person name="Nakano N."/>
            <person name="Nakauchi H."/>
            <person name="Ng P."/>
            <person name="Nilsson R."/>
            <person name="Nishiguchi S."/>
            <person name="Nishikawa S."/>
            <person name="Nori F."/>
            <person name="Ohara O."/>
            <person name="Okazaki Y."/>
            <person name="Orlando V."/>
            <person name="Pang K.C."/>
            <person name="Pavan W.J."/>
            <person name="Pavesi G."/>
            <person name="Pesole G."/>
            <person name="Petrovsky N."/>
            <person name="Piazza S."/>
            <person name="Reed J."/>
            <person name="Reid J.F."/>
            <person name="Ring B.Z."/>
            <person name="Ringwald M."/>
            <person name="Rost B."/>
            <person name="Ruan Y."/>
            <person name="Salzberg S.L."/>
            <person name="Sandelin A."/>
            <person name="Schneider C."/>
            <person name="Schoenbach C."/>
            <person name="Sekiguchi K."/>
            <person name="Semple C.A."/>
            <person name="Seno S."/>
            <person name="Sessa L."/>
            <person name="Sheng Y."/>
            <person name="Shibata Y."/>
            <person name="Shimada H."/>
            <person name="Shimada K."/>
            <person name="Silva D."/>
            <person name="Sinclair B."/>
            <person name="Sperling S."/>
            <person name="Stupka E."/>
            <person name="Sugiura K."/>
            <person name="Sultana R."/>
            <person name="Takenaka Y."/>
            <person name="Taki K."/>
            <person name="Tammoja K."/>
            <person name="Tan S.L."/>
            <person name="Tang S."/>
            <person name="Taylor M.S."/>
            <person name="Tegner J."/>
            <person name="Teichmann S.A."/>
            <person name="Ueda H.R."/>
            <person name="van Nimwegen E."/>
            <person name="Verardo R."/>
            <person name="Wei C.L."/>
            <person name="Yagi K."/>
            <person name="Yamanishi H."/>
            <person name="Zabarovsky E."/>
            <person name="Zhu S."/>
            <person name="Zimmer A."/>
            <person name="Hide W."/>
            <person name="Bult C."/>
            <person name="Grimmond S.M."/>
            <person name="Teasdale R.D."/>
            <person name="Liu E.T."/>
            <person name="Brusic V."/>
            <person name="Quackenbush J."/>
            <person name="Wahlestedt C."/>
            <person name="Mattick J.S."/>
            <person name="Hume D.A."/>
            <person name="Kai C."/>
            <person name="Sasaki D."/>
            <person name="Tomaru Y."/>
            <person name="Fukuda S."/>
            <person name="Kanamori-Katayama M."/>
            <person name="Suzuki M."/>
            <person name="Aoki J."/>
            <person name="Arakawa T."/>
            <person name="Iida J."/>
            <person name="Imamura K."/>
            <person name="Itoh M."/>
            <person name="Kato T."/>
            <person name="Kawaji H."/>
            <person name="Kawagashira N."/>
            <person name="Kawashima T."/>
            <person name="Kojima M."/>
            <person name="Kondo S."/>
            <person name="Konno H."/>
            <person name="Nakano K."/>
            <person name="Ninomiya N."/>
            <person name="Nishio T."/>
            <person name="Okada M."/>
            <person name="Plessy C."/>
            <person name="Shibata K."/>
            <person name="Shiraki T."/>
            <person name="Suzuki S."/>
            <person name="Tagami M."/>
            <person name="Waki K."/>
            <person name="Watahiki A."/>
            <person name="Okamura-Oho Y."/>
            <person name="Suzuki H."/>
            <person name="Kawai J."/>
            <person name="Hayashizaki Y."/>
        </authorList>
    </citation>
    <scope>NUCLEOTIDE SEQUENCE [LARGE SCALE MRNA]</scope>
    <source>
        <strain>C57BL/6J</strain>
        <tissue>Kidney</tissue>
        <tissue>Pancreas</tissue>
        <tissue>Testis</tissue>
    </source>
</reference>
<reference key="3">
    <citation type="journal article" date="2009" name="PLoS Biol.">
        <title>Lineage-specific biology revealed by a finished genome assembly of the mouse.</title>
        <authorList>
            <person name="Church D.M."/>
            <person name="Goodstadt L."/>
            <person name="Hillier L.W."/>
            <person name="Zody M.C."/>
            <person name="Goldstein S."/>
            <person name="She X."/>
            <person name="Bult C.J."/>
            <person name="Agarwala R."/>
            <person name="Cherry J.L."/>
            <person name="DiCuccio M."/>
            <person name="Hlavina W."/>
            <person name="Kapustin Y."/>
            <person name="Meric P."/>
            <person name="Maglott D."/>
            <person name="Birtle Z."/>
            <person name="Marques A.C."/>
            <person name="Graves T."/>
            <person name="Zhou S."/>
            <person name="Teague B."/>
            <person name="Potamousis K."/>
            <person name="Churas C."/>
            <person name="Place M."/>
            <person name="Herschleb J."/>
            <person name="Runnheim R."/>
            <person name="Forrest D."/>
            <person name="Amos-Landgraf J."/>
            <person name="Schwartz D.C."/>
            <person name="Cheng Z."/>
            <person name="Lindblad-Toh K."/>
            <person name="Eichler E.E."/>
            <person name="Ponting C.P."/>
        </authorList>
    </citation>
    <scope>NUCLEOTIDE SEQUENCE [LARGE SCALE GENOMIC DNA]</scope>
    <source>
        <strain>C57BL/6J</strain>
    </source>
</reference>
<reference key="4">
    <citation type="submission" date="2005-07" db="EMBL/GenBank/DDBJ databases">
        <authorList>
            <person name="Mural R.J."/>
            <person name="Adams M.D."/>
            <person name="Myers E.W."/>
            <person name="Smith H.O."/>
            <person name="Venter J.C."/>
        </authorList>
    </citation>
    <scope>NUCLEOTIDE SEQUENCE [LARGE SCALE GENOMIC DNA]</scope>
</reference>
<reference key="5">
    <citation type="journal article" date="2010" name="Cell">
        <title>A tissue-specific atlas of mouse protein phosphorylation and expression.</title>
        <authorList>
            <person name="Huttlin E.L."/>
            <person name="Jedrychowski M.P."/>
            <person name="Elias J.E."/>
            <person name="Goswami T."/>
            <person name="Rad R."/>
            <person name="Beausoleil S.A."/>
            <person name="Villen J."/>
            <person name="Haas W."/>
            <person name="Sowa M.E."/>
            <person name="Gygi S.P."/>
        </authorList>
    </citation>
    <scope>IDENTIFICATION BY MASS SPECTROMETRY [LARGE SCALE ANALYSIS]</scope>
    <source>
        <tissue>Brain</tissue>
        <tissue>Brown adipose tissue</tissue>
        <tissue>Heart</tissue>
        <tissue>Kidney</tissue>
        <tissue>Lung</tissue>
        <tissue>Pancreas</tissue>
        <tissue>Spleen</tissue>
        <tissue>Testis</tissue>
    </source>
</reference>
<reference key="6">
    <citation type="journal article" date="2011" name="PLoS ONE">
        <title>Mammalian frataxin: an essential function for cellular viability through an interaction with a preformed ISCU/NFS1/ISD11 iron-sulfur assembly complex.</title>
        <authorList>
            <person name="Schmucker S."/>
            <person name="Martelli A."/>
            <person name="Colin F."/>
            <person name="Page A."/>
            <person name="Wattenhofer-Donze M."/>
            <person name="Reutenauer L."/>
            <person name="Puccio H."/>
        </authorList>
    </citation>
    <scope>SUBUNIT</scope>
</reference>
<reference key="7">
    <citation type="journal article" date="2015" name="Nat. Commun.">
        <title>Mammalian frataxin directly enhances sulfur transfer of NFS1 persulfide to both ISCU and free thiols.</title>
        <authorList>
            <person name="Parent A."/>
            <person name="Elduque X."/>
            <person name="Cornu D."/>
            <person name="Belot L."/>
            <person name="Le Caer J.P."/>
            <person name="Grandas A."/>
            <person name="Toledano M.B."/>
            <person name="D'Autreaux B."/>
        </authorList>
    </citation>
    <scope>FUNCTION</scope>
    <scope>CATALYTIC ACTIVITY</scope>
    <scope>SUBUNIT</scope>
    <scope>GLUCONOYLATION</scope>
    <scope>IDENTIFICATION BY MASS SPECTROMETRY</scope>
    <scope>PROBABLE ACTIVE SITE</scope>
    <scope>SULFHYDRATION AT CYS-383</scope>
</reference>
<name>NFS1_MOUSE</name>
<gene>
    <name evidence="8 11" type="primary">Nfs1</name>
    <name type="synonym">Nifs</name>
</gene>
<dbReference type="EC" id="2.8.1.7" evidence="6"/>
<dbReference type="EMBL" id="AJ222660">
    <property type="protein sequence ID" value="CAA10916.1"/>
    <property type="molecule type" value="mRNA"/>
</dbReference>
<dbReference type="EMBL" id="AK075575">
    <property type="protein sequence ID" value="BAC35831.1"/>
    <property type="molecule type" value="mRNA"/>
</dbReference>
<dbReference type="EMBL" id="AK132838">
    <property type="protein sequence ID" value="BAE21386.1"/>
    <property type="molecule type" value="mRNA"/>
</dbReference>
<dbReference type="EMBL" id="AK148527">
    <property type="protein sequence ID" value="BAE28601.1"/>
    <property type="molecule type" value="mRNA"/>
</dbReference>
<dbReference type="EMBL" id="AK159828">
    <property type="protein sequence ID" value="BAE35407.1"/>
    <property type="molecule type" value="mRNA"/>
</dbReference>
<dbReference type="EMBL" id="AL833786">
    <property type="status" value="NOT_ANNOTATED_CDS"/>
    <property type="molecule type" value="Genomic_DNA"/>
</dbReference>
<dbReference type="EMBL" id="BX649640">
    <property type="status" value="NOT_ANNOTATED_CDS"/>
    <property type="molecule type" value="Genomic_DNA"/>
</dbReference>
<dbReference type="EMBL" id="CH466551">
    <property type="protein sequence ID" value="EDL06179.1"/>
    <property type="molecule type" value="Genomic_DNA"/>
</dbReference>
<dbReference type="CCDS" id="CCDS16962.1"/>
<dbReference type="RefSeq" id="NP_035041.2">
    <property type="nucleotide sequence ID" value="NM_010911.3"/>
</dbReference>
<dbReference type="SMR" id="Q9Z1J3"/>
<dbReference type="BioGRID" id="201759">
    <property type="interactions" value="10"/>
</dbReference>
<dbReference type="ComplexPortal" id="CPX-5823">
    <property type="entry name" value="Mitochondrial NIAUFX iron-sulfur cluster assembly complex"/>
</dbReference>
<dbReference type="CORUM" id="Q9Z1J3"/>
<dbReference type="FunCoup" id="Q9Z1J3">
    <property type="interactions" value="3339"/>
</dbReference>
<dbReference type="IntAct" id="Q9Z1J3">
    <property type="interactions" value="2"/>
</dbReference>
<dbReference type="MINT" id="Q9Z1J3"/>
<dbReference type="STRING" id="10090.ENSMUSP00000029147"/>
<dbReference type="GlyGen" id="Q9Z1J3">
    <property type="glycosylation" value="1 site, 1 O-linked glycan (1 site)"/>
</dbReference>
<dbReference type="iPTMnet" id="Q9Z1J3"/>
<dbReference type="PhosphoSitePlus" id="Q9Z1J3"/>
<dbReference type="SwissPalm" id="Q9Z1J3"/>
<dbReference type="REPRODUCTION-2DPAGE" id="Q9Z1J3"/>
<dbReference type="jPOST" id="Q9Z1J3"/>
<dbReference type="PaxDb" id="10090-ENSMUSP00000029147"/>
<dbReference type="PeptideAtlas" id="Q9Z1J3"/>
<dbReference type="ProteomicsDB" id="252819"/>
<dbReference type="Pumba" id="Q9Z1J3"/>
<dbReference type="Antibodypedia" id="35035">
    <property type="antibodies" value="234 antibodies from 26 providers"/>
</dbReference>
<dbReference type="DNASU" id="18041"/>
<dbReference type="Ensembl" id="ENSMUST00000029147.16">
    <property type="protein sequence ID" value="ENSMUSP00000029147.10"/>
    <property type="gene ID" value="ENSMUSG00000027618.18"/>
</dbReference>
<dbReference type="GeneID" id="18041"/>
<dbReference type="KEGG" id="mmu:18041"/>
<dbReference type="UCSC" id="uc008nmj.2">
    <property type="organism name" value="mouse"/>
</dbReference>
<dbReference type="AGR" id="MGI:1316706"/>
<dbReference type="CTD" id="9054"/>
<dbReference type="MGI" id="MGI:1316706">
    <property type="gene designation" value="Nfs1"/>
</dbReference>
<dbReference type="VEuPathDB" id="HostDB:ENSMUSG00000027618"/>
<dbReference type="eggNOG" id="KOG1549">
    <property type="taxonomic scope" value="Eukaryota"/>
</dbReference>
<dbReference type="GeneTree" id="ENSGT00940000155740"/>
<dbReference type="HOGENOM" id="CLU_003433_0_2_1"/>
<dbReference type="InParanoid" id="Q9Z1J3"/>
<dbReference type="OMA" id="KGLYWAR"/>
<dbReference type="OrthoDB" id="10250117at2759"/>
<dbReference type="PhylomeDB" id="Q9Z1J3"/>
<dbReference type="TreeFam" id="TF105658"/>
<dbReference type="BRENDA" id="2.8.1.7">
    <property type="organism ID" value="3474"/>
</dbReference>
<dbReference type="Reactome" id="R-MMU-1362409">
    <property type="pathway name" value="Mitochondrial iron-sulfur cluster biogenesis"/>
</dbReference>
<dbReference type="Reactome" id="R-MMU-947581">
    <property type="pathway name" value="Molybdenum cofactor biosynthesis"/>
</dbReference>
<dbReference type="Reactome" id="R-MMU-9854311">
    <property type="pathway name" value="Maturation of TCA enzymes and regulation of TCA cycle"/>
</dbReference>
<dbReference type="Reactome" id="R-MMU-9865881">
    <property type="pathway name" value="Complex III assembly"/>
</dbReference>
<dbReference type="BioGRID-ORCS" id="18041">
    <property type="hits" value="26 hits in 82 CRISPR screens"/>
</dbReference>
<dbReference type="ChiTaRS" id="Nfs1">
    <property type="organism name" value="mouse"/>
</dbReference>
<dbReference type="PRO" id="PR:Q9Z1J3"/>
<dbReference type="Proteomes" id="UP000000589">
    <property type="component" value="Chromosome 2"/>
</dbReference>
<dbReference type="RNAct" id="Q9Z1J3">
    <property type="molecule type" value="protein"/>
</dbReference>
<dbReference type="Bgee" id="ENSMUSG00000027618">
    <property type="expression patterns" value="Expressed in right kidney and 269 other cell types or tissues"/>
</dbReference>
<dbReference type="ExpressionAtlas" id="Q9Z1J3">
    <property type="expression patterns" value="baseline and differential"/>
</dbReference>
<dbReference type="GO" id="GO:0005813">
    <property type="term" value="C:centrosome"/>
    <property type="evidence" value="ECO:0000250"/>
    <property type="project" value="UniProtKB"/>
</dbReference>
<dbReference type="GO" id="GO:0005829">
    <property type="term" value="C:cytosol"/>
    <property type="evidence" value="ECO:0000250"/>
    <property type="project" value="UniProtKB"/>
</dbReference>
<dbReference type="GO" id="GO:1990229">
    <property type="term" value="C:iron-sulfur cluster assembly complex"/>
    <property type="evidence" value="ECO:0000303"/>
    <property type="project" value="ComplexPortal"/>
</dbReference>
<dbReference type="GO" id="GO:0099128">
    <property type="term" value="C:mitochondrial [2Fe-2S] assembly complex"/>
    <property type="evidence" value="ECO:0000314"/>
    <property type="project" value="UniProtKB"/>
</dbReference>
<dbReference type="GO" id="GO:0005759">
    <property type="term" value="C:mitochondrial matrix"/>
    <property type="evidence" value="ECO:0000314"/>
    <property type="project" value="MGI"/>
</dbReference>
<dbReference type="GO" id="GO:0005739">
    <property type="term" value="C:mitochondrion"/>
    <property type="evidence" value="ECO:0000314"/>
    <property type="project" value="MGI"/>
</dbReference>
<dbReference type="GO" id="GO:0005654">
    <property type="term" value="C:nucleoplasm"/>
    <property type="evidence" value="ECO:0007669"/>
    <property type="project" value="Ensembl"/>
</dbReference>
<dbReference type="GO" id="GO:0005634">
    <property type="term" value="C:nucleus"/>
    <property type="evidence" value="ECO:0000314"/>
    <property type="project" value="HGNC-UCL"/>
</dbReference>
<dbReference type="GO" id="GO:0031071">
    <property type="term" value="F:cysteine desulfurase activity"/>
    <property type="evidence" value="ECO:0000250"/>
    <property type="project" value="UniProtKB"/>
</dbReference>
<dbReference type="GO" id="GO:0051536">
    <property type="term" value="F:iron-sulfur cluster binding"/>
    <property type="evidence" value="ECO:0007669"/>
    <property type="project" value="UniProtKB-KW"/>
</dbReference>
<dbReference type="GO" id="GO:0046872">
    <property type="term" value="F:metal ion binding"/>
    <property type="evidence" value="ECO:0007669"/>
    <property type="project" value="UniProtKB-KW"/>
</dbReference>
<dbReference type="GO" id="GO:0042803">
    <property type="term" value="F:protein homodimerization activity"/>
    <property type="evidence" value="ECO:0000250"/>
    <property type="project" value="UniProtKB"/>
</dbReference>
<dbReference type="GO" id="GO:0030170">
    <property type="term" value="F:pyridoxal phosphate binding"/>
    <property type="evidence" value="ECO:0007669"/>
    <property type="project" value="InterPro"/>
</dbReference>
<dbReference type="GO" id="GO:0097163">
    <property type="term" value="F:sulfur carrier activity"/>
    <property type="evidence" value="ECO:0007669"/>
    <property type="project" value="Ensembl"/>
</dbReference>
<dbReference type="GO" id="GO:0044571">
    <property type="term" value="P:[2Fe-2S] cluster assembly"/>
    <property type="evidence" value="ECO:0000250"/>
    <property type="project" value="UniProtKB"/>
</dbReference>
<dbReference type="GO" id="GO:0044572">
    <property type="term" value="P:[4Fe-4S] cluster assembly"/>
    <property type="evidence" value="ECO:0000314"/>
    <property type="project" value="UniProtKB"/>
</dbReference>
<dbReference type="GO" id="GO:0016226">
    <property type="term" value="P:iron-sulfur cluster assembly"/>
    <property type="evidence" value="ECO:0000314"/>
    <property type="project" value="HGNC-UCL"/>
</dbReference>
<dbReference type="GO" id="GO:0006777">
    <property type="term" value="P:Mo-molybdopterin cofactor biosynthetic process"/>
    <property type="evidence" value="ECO:0007669"/>
    <property type="project" value="UniProtKB-KW"/>
</dbReference>
<dbReference type="GO" id="GO:0032324">
    <property type="term" value="P:molybdopterin cofactor biosynthetic process"/>
    <property type="evidence" value="ECO:0000266"/>
    <property type="project" value="MGI"/>
</dbReference>
<dbReference type="FunFam" id="3.40.640.10:FF:000003">
    <property type="entry name" value="Cysteine desulfurase IscS"/>
    <property type="match status" value="1"/>
</dbReference>
<dbReference type="FunFam" id="3.90.1150.10:FF:000002">
    <property type="entry name" value="Cysteine desulfurase IscS"/>
    <property type="match status" value="1"/>
</dbReference>
<dbReference type="Gene3D" id="3.90.1150.10">
    <property type="entry name" value="Aspartate Aminotransferase, domain 1"/>
    <property type="match status" value="1"/>
</dbReference>
<dbReference type="Gene3D" id="3.40.640.10">
    <property type="entry name" value="Type I PLP-dependent aspartate aminotransferase-like (Major domain)"/>
    <property type="match status" value="1"/>
</dbReference>
<dbReference type="HAMAP" id="MF_00331">
    <property type="entry name" value="Cys_desulf_IscS"/>
    <property type="match status" value="1"/>
</dbReference>
<dbReference type="InterPro" id="IPR000192">
    <property type="entry name" value="Aminotrans_V_dom"/>
</dbReference>
<dbReference type="InterPro" id="IPR020578">
    <property type="entry name" value="Aminotrans_V_PyrdxlP_BS"/>
</dbReference>
<dbReference type="InterPro" id="IPR010240">
    <property type="entry name" value="Cys_deSase_IscS"/>
</dbReference>
<dbReference type="InterPro" id="IPR016454">
    <property type="entry name" value="Cysteine_dSase"/>
</dbReference>
<dbReference type="InterPro" id="IPR015424">
    <property type="entry name" value="PyrdxlP-dep_Trfase"/>
</dbReference>
<dbReference type="InterPro" id="IPR015421">
    <property type="entry name" value="PyrdxlP-dep_Trfase_major"/>
</dbReference>
<dbReference type="InterPro" id="IPR015422">
    <property type="entry name" value="PyrdxlP-dep_Trfase_small"/>
</dbReference>
<dbReference type="NCBIfam" id="TIGR02006">
    <property type="entry name" value="IscS"/>
    <property type="match status" value="1"/>
</dbReference>
<dbReference type="NCBIfam" id="NF002806">
    <property type="entry name" value="PRK02948.1"/>
    <property type="match status" value="1"/>
</dbReference>
<dbReference type="NCBIfam" id="NF010611">
    <property type="entry name" value="PRK14012.1"/>
    <property type="match status" value="1"/>
</dbReference>
<dbReference type="PANTHER" id="PTHR11601:SF34">
    <property type="entry name" value="CYSTEINE DESULFURASE"/>
    <property type="match status" value="1"/>
</dbReference>
<dbReference type="PANTHER" id="PTHR11601">
    <property type="entry name" value="CYSTEINE DESULFURYLASE FAMILY MEMBER"/>
    <property type="match status" value="1"/>
</dbReference>
<dbReference type="Pfam" id="PF00266">
    <property type="entry name" value="Aminotran_5"/>
    <property type="match status" value="1"/>
</dbReference>
<dbReference type="PIRSF" id="PIRSF005572">
    <property type="entry name" value="NifS"/>
    <property type="match status" value="1"/>
</dbReference>
<dbReference type="SUPFAM" id="SSF53383">
    <property type="entry name" value="PLP-dependent transferases"/>
    <property type="match status" value="1"/>
</dbReference>
<dbReference type="PROSITE" id="PS00595">
    <property type="entry name" value="AA_TRANSFER_CLASS_5"/>
    <property type="match status" value="1"/>
</dbReference>
<comment type="function">
    <text evidence="2 3 6">Mitochondrial cysteine desulfurase, of the core iron-sulfur cluster (ISC) assembly complex, that catalyzes the desulfuration of L-cysteine to L-alanine, as component of the cysteine desulfurase complex, leading to the formation of a cysteine persulfide intermediate at the active site cysteine residue and participates in the [2Fe-2S] clusters assembly on the scaffolding protein ISCU (PubMed:25597503). The persulfide is then transferred on the flexible Cys loop from the catalytic site of NFS1 to the surface of NFS1 (By similarity). After the NFS1-linked persulfide sulfur is transferred to one of the conserved Cys residues of the scaffold, a reaction assisted by FXN (PubMed:25597503). The core iron-sulfur cluster (ISC) assembly complex is involved in the de novo synthesis of a [2Fe-2S] cluster, the first step of the mitochondrial iron-sulfur protein biogenesis. This process is initiated by the cysteine desulfurase complex (NFS1:LYRM4:NDUFAB1) that produces persulfide which is delivered on the scaffold protein ISCU in a FXN-dependent manner. Then this complex is stabilized by FDX2 which provides reducing equivalents to accomplish the [2Fe-2S] cluster assembly. Finally, the [2Fe-2S] cluster is transferred from ISCU to chaperone proteins, including HSCB, HSPA9 and GLRX5 (By similarity).</text>
</comment>
<comment type="catalytic activity">
    <reaction evidence="6">
        <text>(sulfur carrier)-H + L-cysteine = (sulfur carrier)-SH + L-alanine</text>
        <dbReference type="Rhea" id="RHEA:43892"/>
        <dbReference type="Rhea" id="RHEA-COMP:14737"/>
        <dbReference type="Rhea" id="RHEA-COMP:14739"/>
        <dbReference type="ChEBI" id="CHEBI:29917"/>
        <dbReference type="ChEBI" id="CHEBI:35235"/>
        <dbReference type="ChEBI" id="CHEBI:57972"/>
        <dbReference type="ChEBI" id="CHEBI:64428"/>
        <dbReference type="EC" id="2.8.1.7"/>
    </reaction>
    <physiologicalReaction direction="left-to-right" evidence="6">
        <dbReference type="Rhea" id="RHEA:43893"/>
    </physiologicalReaction>
</comment>
<comment type="catalytic activity">
    <reaction evidence="3">
        <text>L-cysteinyl-[cysteine desulfurase] + L-cysteine = S-sulfanyl-L-cysteinyl-[cysteine desulfurase] + L-alanine</text>
        <dbReference type="Rhea" id="RHEA:17457"/>
        <dbReference type="Rhea" id="RHEA-COMP:12157"/>
        <dbReference type="Rhea" id="RHEA-COMP:12158"/>
        <dbReference type="ChEBI" id="CHEBI:29950"/>
        <dbReference type="ChEBI" id="CHEBI:35235"/>
        <dbReference type="ChEBI" id="CHEBI:57972"/>
        <dbReference type="ChEBI" id="CHEBI:61963"/>
    </reaction>
</comment>
<comment type="cofactor">
    <cofactor evidence="3">
        <name>pyridoxal 5'-phosphate</name>
        <dbReference type="ChEBI" id="CHEBI:597326"/>
    </cofactor>
</comment>
<comment type="activity regulation">
    <text evidence="3">Active only in complex with LYRM4.</text>
</comment>
<comment type="subunit">
    <text evidence="3 5 6">Homodimer (By similarity). Component of the mitochondrial core iron-sulfur cluster (ISC) complex composed of NFS1, LYRM4, NDUFAB1, ISCU, FXN, and FDX2; this complex is a heterohexamer containing two copies of each monomer (By similarity). Component of cyteine desulfurase complex composed of NFS1, LYRM4 and NDUFAB1; this complex contributes to the activation of cysteine desulfurase activity and NFS1 stabilization. Interacts (homodimer form) with ISCU (D-state); each monomer interacts with the C-terminal regions of each NFS1 monomer. Interacts with HSPA9. Interacts (via homodimer form) with FDX2. Interacts (via homodimer form) with FXN. Interacts with LYRM4 (By similarity). Component of a complex composed of FXN, NFS1, LYRM4 and ISCU (PubMed:21298097, PubMed:25597503).</text>
</comment>
<comment type="subcellular location">
    <subcellularLocation>
        <location evidence="7">Mitochondrion</location>
    </subcellularLocation>
</comment>
<comment type="tissue specificity">
    <text evidence="7">Ubiquitous.</text>
</comment>
<comment type="PTM">
    <text evidence="6">N-gluconoylated.</text>
</comment>
<comment type="PTM">
    <text evidence="6">Cysteine persulfide intermediate is reduced by thiol-containing molecules like glutathione and L-cysteine (PubMed:25597503). Persulfide reduction is a rate-limiting step of cysteine desulfurase catalytic cycle (PubMed:25597503).</text>
</comment>
<comment type="similarity">
    <text evidence="9">Belongs to the class-V pyridoxal-phosphate-dependent aminotransferase family. NifS/IscS subfamily.</text>
</comment>
<keyword id="KW-0408">Iron</keyword>
<keyword id="KW-0411">Iron-sulfur</keyword>
<keyword id="KW-0479">Metal-binding</keyword>
<keyword id="KW-0496">Mitochondrion</keyword>
<keyword id="KW-0501">Molybdenum cofactor biosynthesis</keyword>
<keyword id="KW-0663">Pyridoxal phosphate</keyword>
<keyword id="KW-1185">Reference proteome</keyword>
<keyword id="KW-0808">Transferase</keyword>
<keyword id="KW-0809">Transit peptide</keyword>
<keyword id="KW-0862">Zinc</keyword>
<proteinExistence type="evidence at protein level"/>
<evidence type="ECO:0000250" key="1">
    <source>
        <dbReference type="UniProtKB" id="O29689"/>
    </source>
</evidence>
<evidence type="ECO:0000250" key="2">
    <source>
        <dbReference type="UniProtKB" id="Q9H1K1"/>
    </source>
</evidence>
<evidence type="ECO:0000250" key="3">
    <source>
        <dbReference type="UniProtKB" id="Q9Y697"/>
    </source>
</evidence>
<evidence type="ECO:0000255" key="4"/>
<evidence type="ECO:0000269" key="5">
    <source>
    </source>
</evidence>
<evidence type="ECO:0000269" key="6">
    <source>
    </source>
</evidence>
<evidence type="ECO:0000269" key="7">
    <source>
    </source>
</evidence>
<evidence type="ECO:0000303" key="8">
    <source>
    </source>
</evidence>
<evidence type="ECO:0000305" key="9"/>
<evidence type="ECO:0000305" key="10">
    <source>
    </source>
</evidence>
<evidence type="ECO:0000312" key="11">
    <source>
        <dbReference type="MGI" id="MGI:1316706"/>
    </source>
</evidence>
<protein>
    <recommendedName>
        <fullName evidence="9">Cysteine desulfurase</fullName>
        <shortName evidence="8">m-Nfs1</shortName>
        <ecNumber evidence="6">2.8.1.7</ecNumber>
    </recommendedName>
</protein>